<reference key="1">
    <citation type="book" date="1997" name="Avian molecular evolution and systematics">
        <title>Phylogenetic relationships of the ratite birds: resolving conflicts between molecular and morphological data sets.</title>
        <editorList>
            <person name="Mindell D.P."/>
        </editorList>
        <authorList>
            <person name="Lee K."/>
            <person name="Feinstein J."/>
            <person name="Cracraft J."/>
        </authorList>
    </citation>
    <scope>NUCLEOTIDE SEQUENCE [GENOMIC DNA]</scope>
</reference>
<accession>O03893</accession>
<keyword id="KW-0186">Copper</keyword>
<keyword id="KW-0249">Electron transport</keyword>
<keyword id="KW-0460">Magnesium</keyword>
<keyword id="KW-0472">Membrane</keyword>
<keyword id="KW-0479">Metal-binding</keyword>
<keyword id="KW-0496">Mitochondrion</keyword>
<keyword id="KW-0999">Mitochondrion inner membrane</keyword>
<keyword id="KW-0679">Respiratory chain</keyword>
<keyword id="KW-1278">Translocase</keyword>
<keyword id="KW-0812">Transmembrane</keyword>
<keyword id="KW-1133">Transmembrane helix</keyword>
<keyword id="KW-0813">Transport</keyword>
<gene>
    <name type="primary">MT-CO2</name>
    <name type="synonym">COII</name>
    <name type="synonym">COXII</name>
    <name type="synonym">MTCO2</name>
</gene>
<dbReference type="EC" id="7.1.1.9"/>
<dbReference type="EMBL" id="U76068">
    <property type="protein sequence ID" value="AAB61326.1"/>
    <property type="molecule type" value="Genomic_DNA"/>
</dbReference>
<dbReference type="SMR" id="O03893"/>
<dbReference type="GO" id="GO:0005743">
    <property type="term" value="C:mitochondrial inner membrane"/>
    <property type="evidence" value="ECO:0007669"/>
    <property type="project" value="UniProtKB-SubCell"/>
</dbReference>
<dbReference type="GO" id="GO:0045277">
    <property type="term" value="C:respiratory chain complex IV"/>
    <property type="evidence" value="ECO:0000250"/>
    <property type="project" value="UniProtKB"/>
</dbReference>
<dbReference type="GO" id="GO:0005507">
    <property type="term" value="F:copper ion binding"/>
    <property type="evidence" value="ECO:0007669"/>
    <property type="project" value="InterPro"/>
</dbReference>
<dbReference type="GO" id="GO:0004129">
    <property type="term" value="F:cytochrome-c oxidase activity"/>
    <property type="evidence" value="ECO:0007669"/>
    <property type="project" value="UniProtKB-EC"/>
</dbReference>
<dbReference type="GO" id="GO:0042773">
    <property type="term" value="P:ATP synthesis coupled electron transport"/>
    <property type="evidence" value="ECO:0007669"/>
    <property type="project" value="TreeGrafter"/>
</dbReference>
<dbReference type="CDD" id="cd13912">
    <property type="entry name" value="CcO_II_C"/>
    <property type="match status" value="1"/>
</dbReference>
<dbReference type="FunFam" id="2.60.40.420:FF:000001">
    <property type="entry name" value="Cytochrome c oxidase subunit 2"/>
    <property type="match status" value="1"/>
</dbReference>
<dbReference type="Gene3D" id="1.10.287.90">
    <property type="match status" value="1"/>
</dbReference>
<dbReference type="Gene3D" id="2.60.40.420">
    <property type="entry name" value="Cupredoxins - blue copper proteins"/>
    <property type="match status" value="1"/>
</dbReference>
<dbReference type="InterPro" id="IPR045187">
    <property type="entry name" value="CcO_II"/>
</dbReference>
<dbReference type="InterPro" id="IPR002429">
    <property type="entry name" value="CcO_II-like_C"/>
</dbReference>
<dbReference type="InterPro" id="IPR034210">
    <property type="entry name" value="CcO_II_C"/>
</dbReference>
<dbReference type="InterPro" id="IPR001505">
    <property type="entry name" value="Copper_CuA"/>
</dbReference>
<dbReference type="InterPro" id="IPR008972">
    <property type="entry name" value="Cupredoxin"/>
</dbReference>
<dbReference type="InterPro" id="IPR014222">
    <property type="entry name" value="Cyt_c_oxidase_su2"/>
</dbReference>
<dbReference type="InterPro" id="IPR011759">
    <property type="entry name" value="Cyt_c_oxidase_su2_TM_dom"/>
</dbReference>
<dbReference type="InterPro" id="IPR036257">
    <property type="entry name" value="Cyt_c_oxidase_su2_TM_sf"/>
</dbReference>
<dbReference type="NCBIfam" id="TIGR02866">
    <property type="entry name" value="CoxB"/>
    <property type="match status" value="1"/>
</dbReference>
<dbReference type="PANTHER" id="PTHR22888:SF9">
    <property type="entry name" value="CYTOCHROME C OXIDASE SUBUNIT 2"/>
    <property type="match status" value="1"/>
</dbReference>
<dbReference type="PANTHER" id="PTHR22888">
    <property type="entry name" value="CYTOCHROME C OXIDASE, SUBUNIT II"/>
    <property type="match status" value="1"/>
</dbReference>
<dbReference type="Pfam" id="PF00116">
    <property type="entry name" value="COX2"/>
    <property type="match status" value="1"/>
</dbReference>
<dbReference type="Pfam" id="PF02790">
    <property type="entry name" value="COX2_TM"/>
    <property type="match status" value="1"/>
</dbReference>
<dbReference type="PRINTS" id="PR01166">
    <property type="entry name" value="CYCOXIDASEII"/>
</dbReference>
<dbReference type="SUPFAM" id="SSF49503">
    <property type="entry name" value="Cupredoxins"/>
    <property type="match status" value="1"/>
</dbReference>
<dbReference type="SUPFAM" id="SSF81464">
    <property type="entry name" value="Cytochrome c oxidase subunit II-like, transmembrane region"/>
    <property type="match status" value="1"/>
</dbReference>
<dbReference type="PROSITE" id="PS00078">
    <property type="entry name" value="COX2"/>
    <property type="match status" value="1"/>
</dbReference>
<dbReference type="PROSITE" id="PS50857">
    <property type="entry name" value="COX2_CUA"/>
    <property type="match status" value="1"/>
</dbReference>
<dbReference type="PROSITE" id="PS50999">
    <property type="entry name" value="COX2_TM"/>
    <property type="match status" value="1"/>
</dbReference>
<organism>
    <name type="scientific">Rhea americana</name>
    <name type="common">Greater rhea</name>
    <name type="synonym">Common rhea</name>
    <dbReference type="NCBI Taxonomy" id="8797"/>
    <lineage>
        <taxon>Eukaryota</taxon>
        <taxon>Metazoa</taxon>
        <taxon>Chordata</taxon>
        <taxon>Craniata</taxon>
        <taxon>Vertebrata</taxon>
        <taxon>Euteleostomi</taxon>
        <taxon>Archelosauria</taxon>
        <taxon>Archosauria</taxon>
        <taxon>Dinosauria</taxon>
        <taxon>Saurischia</taxon>
        <taxon>Theropoda</taxon>
        <taxon>Coelurosauria</taxon>
        <taxon>Aves</taxon>
        <taxon>Palaeognathae</taxon>
        <taxon>Rheiformes</taxon>
        <taxon>Rheidae</taxon>
        <taxon>Rhea</taxon>
    </lineage>
</organism>
<proteinExistence type="inferred from homology"/>
<protein>
    <recommendedName>
        <fullName>Cytochrome c oxidase subunit 2</fullName>
        <ecNumber>7.1.1.9</ecNumber>
    </recommendedName>
    <alternativeName>
        <fullName>Cytochrome c oxidase polypeptide II</fullName>
    </alternativeName>
</protein>
<feature type="chain" id="PRO_0000183678" description="Cytochrome c oxidase subunit 2">
    <location>
        <begin position="1" status="less than"/>
        <end position="199"/>
    </location>
</feature>
<feature type="transmembrane region" description="Helical; Name=I" evidence="3">
    <location>
        <begin position="1" status="less than"/>
        <end position="13"/>
    </location>
</feature>
<feature type="topological domain" description="Mitochondrial matrix" evidence="3">
    <location>
        <begin position="14"/>
        <end position="26"/>
    </location>
</feature>
<feature type="transmembrane region" description="Helical; Name=II" evidence="3">
    <location>
        <begin position="27"/>
        <end position="54"/>
    </location>
</feature>
<feature type="topological domain" description="Mitochondrial intermembrane" evidence="3">
    <location>
        <begin position="55"/>
        <end position="199"/>
    </location>
</feature>
<feature type="binding site" evidence="3">
    <location>
        <position position="128"/>
    </location>
    <ligand>
        <name>Cu cation</name>
        <dbReference type="ChEBI" id="CHEBI:23378"/>
        <label>A1</label>
    </ligand>
</feature>
<feature type="binding site" evidence="3">
    <location>
        <position position="163"/>
    </location>
    <ligand>
        <name>Cu cation</name>
        <dbReference type="ChEBI" id="CHEBI:23378"/>
        <label>A1</label>
    </ligand>
</feature>
<feature type="binding site" evidence="3">
    <location>
        <position position="163"/>
    </location>
    <ligand>
        <name>Cu cation</name>
        <dbReference type="ChEBI" id="CHEBI:23378"/>
        <label>A2</label>
    </ligand>
</feature>
<feature type="binding site" evidence="3">
    <location>
        <position position="165"/>
    </location>
    <ligand>
        <name>Cu cation</name>
        <dbReference type="ChEBI" id="CHEBI:23378"/>
        <label>A2</label>
    </ligand>
</feature>
<feature type="binding site" evidence="3">
    <location>
        <position position="165"/>
    </location>
    <ligand>
        <name>Mg(2+)</name>
        <dbReference type="ChEBI" id="CHEBI:18420"/>
        <note>ligand shared with MT-CO1</note>
    </ligand>
</feature>
<feature type="binding site" evidence="3">
    <location>
        <position position="167"/>
    </location>
    <ligand>
        <name>Cu cation</name>
        <dbReference type="ChEBI" id="CHEBI:23378"/>
        <label>A1</label>
    </ligand>
</feature>
<feature type="binding site" evidence="3">
    <location>
        <position position="167"/>
    </location>
    <ligand>
        <name>Cu cation</name>
        <dbReference type="ChEBI" id="CHEBI:23378"/>
        <label>A2</label>
    </ligand>
</feature>
<feature type="binding site" evidence="3">
    <location>
        <position position="171"/>
    </location>
    <ligand>
        <name>Cu cation</name>
        <dbReference type="ChEBI" id="CHEBI:23378"/>
        <label>A2</label>
    </ligand>
</feature>
<feature type="binding site" evidence="3">
    <location>
        <position position="174"/>
    </location>
    <ligand>
        <name>Cu cation</name>
        <dbReference type="ChEBI" id="CHEBI:23378"/>
        <label>A1</label>
    </ligand>
</feature>
<feature type="non-terminal residue">
    <location>
        <position position="1"/>
    </location>
</feature>
<comment type="function">
    <text evidence="2">Component of the cytochrome c oxidase, the last enzyme in the mitochondrial electron transport chain which drives oxidative phosphorylation. The respiratory chain contains 3 multisubunit complexes succinate dehydrogenase (complex II, CII), ubiquinol-cytochrome c oxidoreductase (cytochrome b-c1 complex, complex III, CIII) and cytochrome c oxidase (complex IV, CIV), that cooperate to transfer electrons derived from NADH and succinate to molecular oxygen, creating an electrochemical gradient over the inner membrane that drives transmembrane transport and the ATP synthase. Cytochrome c oxidase is the component of the respiratory chain that catalyzes the reduction of oxygen to water. Electrons originating from reduced cytochrome c in the intermembrane space (IMS) are transferred via the dinuclear copper A center (CU(A)) of subunit 2 and heme A of subunit 1 to the active site in subunit 1, a binuclear center (BNC) formed by heme A3 and copper B (CU(B)). The BNC reduces molecular oxygen to 2 water molecules using 4 electrons from cytochrome c in the IMS and 4 protons from the mitochondrial matrix.</text>
</comment>
<comment type="catalytic activity">
    <reaction evidence="2">
        <text>4 Fe(II)-[cytochrome c] + O2 + 8 H(+)(in) = 4 Fe(III)-[cytochrome c] + 2 H2O + 4 H(+)(out)</text>
        <dbReference type="Rhea" id="RHEA:11436"/>
        <dbReference type="Rhea" id="RHEA-COMP:10350"/>
        <dbReference type="Rhea" id="RHEA-COMP:14399"/>
        <dbReference type="ChEBI" id="CHEBI:15377"/>
        <dbReference type="ChEBI" id="CHEBI:15378"/>
        <dbReference type="ChEBI" id="CHEBI:15379"/>
        <dbReference type="ChEBI" id="CHEBI:29033"/>
        <dbReference type="ChEBI" id="CHEBI:29034"/>
        <dbReference type="EC" id="7.1.1.9"/>
    </reaction>
    <physiologicalReaction direction="left-to-right" evidence="2">
        <dbReference type="Rhea" id="RHEA:11437"/>
    </physiologicalReaction>
</comment>
<comment type="cofactor">
    <cofactor evidence="3">
        <name>Cu cation</name>
        <dbReference type="ChEBI" id="CHEBI:23378"/>
    </cofactor>
    <text evidence="3">Binds a dinuclear copper A center per subunit.</text>
</comment>
<comment type="subunit">
    <text evidence="1 3">Component of the cytochrome c oxidase (complex IV, CIV), a multisubunit enzyme composed of 14 subunits. The complex is composed of a catalytic core of 3 subunits MT-CO1, MT-CO2 and MT-CO3, encoded in the mitochondrial DNA, and 11 supernumerary subunits COX4I, COX5A, COX5B, COX6A, COX6B, COX6C, COX7A, COX7B, COX7C, COX8 and NDUFA4, which are encoded in the nuclear genome. The complex exists as a monomer or a dimer and forms supercomplexes (SCs) in the inner mitochondrial membrane with NADH-ubiquinone oxidoreductase (complex I, CI) and ubiquinol-cytochrome c oxidoreductase (cytochrome b-c1 complex, complex III, CIII), resulting in different assemblies (supercomplex SCI(1)III(2)IV(1) and megacomplex MCI(2)III(2)IV(2)) (By similarity). Found in a complex with TMEM177, COA6, COX18, COX20, SCO1 and SCO2. Interacts with TMEM177 in a COX20-dependent manner. Interacts with COX20. Interacts with COX16 (By similarity).</text>
</comment>
<comment type="subcellular location">
    <subcellularLocation>
        <location evidence="3">Mitochondrion inner membrane</location>
        <topology evidence="3">Multi-pass membrane protein</topology>
    </subcellularLocation>
</comment>
<comment type="similarity">
    <text evidence="4">Belongs to the cytochrome c oxidase subunit 2 family.</text>
</comment>
<name>COX2_RHEAM</name>
<geneLocation type="mitochondrion"/>
<evidence type="ECO:0000250" key="1">
    <source>
        <dbReference type="UniProtKB" id="P00403"/>
    </source>
</evidence>
<evidence type="ECO:0000250" key="2">
    <source>
        <dbReference type="UniProtKB" id="P00410"/>
    </source>
</evidence>
<evidence type="ECO:0000250" key="3">
    <source>
        <dbReference type="UniProtKB" id="P68530"/>
    </source>
</evidence>
<evidence type="ECO:0000305" key="4"/>
<sequence length="199" mass="22265">AICSLVLYLLSLMLMEKLSSNTVDAQEVELIWTILPAIVLILLALPSLQILYMMDEIDEPDLTLKAIGHQWYWSYEYTDFKDLAFDSYMIPTTELPSGHFRLLEVDHRVVVPMESPIRVIVTAGDVLHSWAVPTLGVKTDAIPGRLNQTSFITTRPGIFYGQCSEICGANHSYMPIVVESTPLAHFESWSSLLSSSSSL</sequence>